<gene>
    <name evidence="1" type="primary">ftsB</name>
    <name type="ordered locus">Daro_2363</name>
</gene>
<reference key="1">
    <citation type="journal article" date="2009" name="BMC Genomics">
        <title>Metabolic analysis of the soil microbe Dechloromonas aromatica str. RCB: indications of a surprisingly complex life-style and cryptic anaerobic pathways for aromatic degradation.</title>
        <authorList>
            <person name="Salinero K.K."/>
            <person name="Keller K."/>
            <person name="Feil W.S."/>
            <person name="Feil H."/>
            <person name="Trong S."/>
            <person name="Di Bartolo G."/>
            <person name="Lapidus A."/>
        </authorList>
    </citation>
    <scope>NUCLEOTIDE SEQUENCE [LARGE SCALE GENOMIC DNA]</scope>
    <source>
        <strain>RCB</strain>
    </source>
</reference>
<evidence type="ECO:0000255" key="1">
    <source>
        <dbReference type="HAMAP-Rule" id="MF_00599"/>
    </source>
</evidence>
<sequence length="94" mass="10943">MRWLTVGLLAAIGLLQYPLWVGKGGWLKVWEYDRQLQQQKEVTRKLEIRNAGLDAEVRDLKQGYDAIEERARFELGMVKQDETFVQIPEKVPGK</sequence>
<proteinExistence type="inferred from homology"/>
<name>FTSB_DECAR</name>
<protein>
    <recommendedName>
        <fullName evidence="1">Cell division protein FtsB</fullName>
    </recommendedName>
</protein>
<dbReference type="EMBL" id="CP000089">
    <property type="protein sequence ID" value="AAZ47099.1"/>
    <property type="molecule type" value="Genomic_DNA"/>
</dbReference>
<dbReference type="SMR" id="Q47DI2"/>
<dbReference type="STRING" id="159087.Daro_2363"/>
<dbReference type="KEGG" id="dar:Daro_2363"/>
<dbReference type="eggNOG" id="COG2919">
    <property type="taxonomic scope" value="Bacteria"/>
</dbReference>
<dbReference type="HOGENOM" id="CLU_134863_5_0_4"/>
<dbReference type="OrthoDB" id="7061211at2"/>
<dbReference type="GO" id="GO:0032153">
    <property type="term" value="C:cell division site"/>
    <property type="evidence" value="ECO:0007669"/>
    <property type="project" value="UniProtKB-UniRule"/>
</dbReference>
<dbReference type="GO" id="GO:0030428">
    <property type="term" value="C:cell septum"/>
    <property type="evidence" value="ECO:0007669"/>
    <property type="project" value="TreeGrafter"/>
</dbReference>
<dbReference type="GO" id="GO:0005886">
    <property type="term" value="C:plasma membrane"/>
    <property type="evidence" value="ECO:0007669"/>
    <property type="project" value="UniProtKB-SubCell"/>
</dbReference>
<dbReference type="GO" id="GO:0043093">
    <property type="term" value="P:FtsZ-dependent cytokinesis"/>
    <property type="evidence" value="ECO:0007669"/>
    <property type="project" value="UniProtKB-UniRule"/>
</dbReference>
<dbReference type="HAMAP" id="MF_00599">
    <property type="entry name" value="FtsB"/>
    <property type="match status" value="1"/>
</dbReference>
<dbReference type="InterPro" id="IPR023081">
    <property type="entry name" value="Cell_div_FtsB"/>
</dbReference>
<dbReference type="InterPro" id="IPR007060">
    <property type="entry name" value="FtsL/DivIC"/>
</dbReference>
<dbReference type="NCBIfam" id="NF002058">
    <property type="entry name" value="PRK00888.1"/>
    <property type="match status" value="1"/>
</dbReference>
<dbReference type="PANTHER" id="PTHR37485">
    <property type="entry name" value="CELL DIVISION PROTEIN FTSB"/>
    <property type="match status" value="1"/>
</dbReference>
<dbReference type="PANTHER" id="PTHR37485:SF1">
    <property type="entry name" value="CELL DIVISION PROTEIN FTSB"/>
    <property type="match status" value="1"/>
</dbReference>
<dbReference type="Pfam" id="PF04977">
    <property type="entry name" value="DivIC"/>
    <property type="match status" value="1"/>
</dbReference>
<accession>Q47DI2</accession>
<feature type="chain" id="PRO_1000025695" description="Cell division protein FtsB">
    <location>
        <begin position="1"/>
        <end position="94"/>
    </location>
</feature>
<feature type="topological domain" description="Cytoplasmic" evidence="1">
    <location>
        <begin position="1"/>
        <end position="3"/>
    </location>
</feature>
<feature type="transmembrane region" description="Helical" evidence="1">
    <location>
        <begin position="4"/>
        <end position="21"/>
    </location>
</feature>
<feature type="topological domain" description="Periplasmic" evidence="1">
    <location>
        <begin position="22"/>
        <end position="94"/>
    </location>
</feature>
<feature type="coiled-coil region" evidence="1">
    <location>
        <begin position="31"/>
        <end position="73"/>
    </location>
</feature>
<comment type="function">
    <text evidence="1">Essential cell division protein. May link together the upstream cell division proteins, which are predominantly cytoplasmic, with the downstream cell division proteins, which are predominantly periplasmic.</text>
</comment>
<comment type="subunit">
    <text evidence="1">Part of a complex composed of FtsB, FtsL and FtsQ.</text>
</comment>
<comment type="subcellular location">
    <subcellularLocation>
        <location evidence="1">Cell inner membrane</location>
        <topology evidence="1">Single-pass type II membrane protein</topology>
    </subcellularLocation>
    <text evidence="1">Localizes to the division septum.</text>
</comment>
<comment type="similarity">
    <text evidence="1">Belongs to the FtsB family.</text>
</comment>
<organism>
    <name type="scientific">Dechloromonas aromatica (strain RCB)</name>
    <dbReference type="NCBI Taxonomy" id="159087"/>
    <lineage>
        <taxon>Bacteria</taxon>
        <taxon>Pseudomonadati</taxon>
        <taxon>Pseudomonadota</taxon>
        <taxon>Betaproteobacteria</taxon>
        <taxon>Rhodocyclales</taxon>
        <taxon>Azonexaceae</taxon>
        <taxon>Dechloromonas</taxon>
    </lineage>
</organism>
<keyword id="KW-0131">Cell cycle</keyword>
<keyword id="KW-0132">Cell division</keyword>
<keyword id="KW-0997">Cell inner membrane</keyword>
<keyword id="KW-1003">Cell membrane</keyword>
<keyword id="KW-0175">Coiled coil</keyword>
<keyword id="KW-0472">Membrane</keyword>
<keyword id="KW-0812">Transmembrane</keyword>
<keyword id="KW-1133">Transmembrane helix</keyword>